<gene>
    <name evidence="1" type="primary">xerC</name>
    <name type="ordered locus">PputW619_0242</name>
</gene>
<evidence type="ECO:0000255" key="1">
    <source>
        <dbReference type="HAMAP-Rule" id="MF_01808"/>
    </source>
</evidence>
<evidence type="ECO:0000255" key="2">
    <source>
        <dbReference type="PROSITE-ProRule" id="PRU01246"/>
    </source>
</evidence>
<evidence type="ECO:0000255" key="3">
    <source>
        <dbReference type="PROSITE-ProRule" id="PRU01248"/>
    </source>
</evidence>
<sequence>MERQLEAYCAHLRNERQVSEHTLLAYRRDLEKVIEYCNTQGIAGWGALQIQQLRQLIARQHHQGQSSRSLARLLSAVRGLYRYLNREGLCQHDPASGLSAPKGERRLPKVLDTDRALQLLDGGVDDDFIARRDQAILELFYSSGLRLSELTNLDLEHLDLAAGLVQVLGKGGKARVLPVGRKAREAMQQWLRLRGIGGPRDGAVFISRQGNRLGPRAIQMRVKAAGERELGQHLHPHMLRHSFASHVLESSQDLRAVQEMLGHADISTTQIYTHLDFQHLAAVYDSAHPRAKRSKGTDS</sequence>
<organism>
    <name type="scientific">Pseudomonas putida (strain W619)</name>
    <dbReference type="NCBI Taxonomy" id="390235"/>
    <lineage>
        <taxon>Bacteria</taxon>
        <taxon>Pseudomonadati</taxon>
        <taxon>Pseudomonadota</taxon>
        <taxon>Gammaproteobacteria</taxon>
        <taxon>Pseudomonadales</taxon>
        <taxon>Pseudomonadaceae</taxon>
        <taxon>Pseudomonas</taxon>
    </lineage>
</organism>
<dbReference type="EMBL" id="CP000949">
    <property type="protein sequence ID" value="ACA70748.1"/>
    <property type="molecule type" value="Genomic_DNA"/>
</dbReference>
<dbReference type="SMR" id="B1J1V8"/>
<dbReference type="STRING" id="390235.PputW619_0242"/>
<dbReference type="KEGG" id="ppw:PputW619_0242"/>
<dbReference type="eggNOG" id="COG4973">
    <property type="taxonomic scope" value="Bacteria"/>
</dbReference>
<dbReference type="HOGENOM" id="CLU_027562_9_0_6"/>
<dbReference type="OrthoDB" id="9801717at2"/>
<dbReference type="GO" id="GO:0005737">
    <property type="term" value="C:cytoplasm"/>
    <property type="evidence" value="ECO:0007669"/>
    <property type="project" value="UniProtKB-SubCell"/>
</dbReference>
<dbReference type="GO" id="GO:0003677">
    <property type="term" value="F:DNA binding"/>
    <property type="evidence" value="ECO:0007669"/>
    <property type="project" value="UniProtKB-KW"/>
</dbReference>
<dbReference type="GO" id="GO:0009037">
    <property type="term" value="F:tyrosine-based site-specific recombinase activity"/>
    <property type="evidence" value="ECO:0007669"/>
    <property type="project" value="UniProtKB-UniRule"/>
</dbReference>
<dbReference type="GO" id="GO:0051301">
    <property type="term" value="P:cell division"/>
    <property type="evidence" value="ECO:0007669"/>
    <property type="project" value="UniProtKB-KW"/>
</dbReference>
<dbReference type="GO" id="GO:0007059">
    <property type="term" value="P:chromosome segregation"/>
    <property type="evidence" value="ECO:0007669"/>
    <property type="project" value="UniProtKB-UniRule"/>
</dbReference>
<dbReference type="GO" id="GO:0006313">
    <property type="term" value="P:DNA transposition"/>
    <property type="evidence" value="ECO:0007669"/>
    <property type="project" value="UniProtKB-UniRule"/>
</dbReference>
<dbReference type="CDD" id="cd00798">
    <property type="entry name" value="INT_XerDC_C"/>
    <property type="match status" value="1"/>
</dbReference>
<dbReference type="Gene3D" id="1.10.150.130">
    <property type="match status" value="1"/>
</dbReference>
<dbReference type="Gene3D" id="1.10.443.10">
    <property type="entry name" value="Intergrase catalytic core"/>
    <property type="match status" value="1"/>
</dbReference>
<dbReference type="HAMAP" id="MF_01808">
    <property type="entry name" value="Recomb_XerC_XerD"/>
    <property type="match status" value="1"/>
</dbReference>
<dbReference type="InterPro" id="IPR044068">
    <property type="entry name" value="CB"/>
</dbReference>
<dbReference type="InterPro" id="IPR011010">
    <property type="entry name" value="DNA_brk_join_enz"/>
</dbReference>
<dbReference type="InterPro" id="IPR013762">
    <property type="entry name" value="Integrase-like_cat_sf"/>
</dbReference>
<dbReference type="InterPro" id="IPR002104">
    <property type="entry name" value="Integrase_catalytic"/>
</dbReference>
<dbReference type="InterPro" id="IPR010998">
    <property type="entry name" value="Integrase_recombinase_N"/>
</dbReference>
<dbReference type="InterPro" id="IPR004107">
    <property type="entry name" value="Integrase_SAM-like_N"/>
</dbReference>
<dbReference type="InterPro" id="IPR011931">
    <property type="entry name" value="Recomb_XerC"/>
</dbReference>
<dbReference type="InterPro" id="IPR023009">
    <property type="entry name" value="Tyrosine_recombinase_XerC/XerD"/>
</dbReference>
<dbReference type="InterPro" id="IPR050090">
    <property type="entry name" value="Tyrosine_recombinase_XerCD"/>
</dbReference>
<dbReference type="NCBIfam" id="NF001399">
    <property type="entry name" value="PRK00283.1"/>
    <property type="match status" value="1"/>
</dbReference>
<dbReference type="NCBIfam" id="TIGR02224">
    <property type="entry name" value="recomb_XerC"/>
    <property type="match status" value="1"/>
</dbReference>
<dbReference type="PANTHER" id="PTHR30349">
    <property type="entry name" value="PHAGE INTEGRASE-RELATED"/>
    <property type="match status" value="1"/>
</dbReference>
<dbReference type="PANTHER" id="PTHR30349:SF81">
    <property type="entry name" value="TYROSINE RECOMBINASE XERC"/>
    <property type="match status" value="1"/>
</dbReference>
<dbReference type="Pfam" id="PF02899">
    <property type="entry name" value="Phage_int_SAM_1"/>
    <property type="match status" value="1"/>
</dbReference>
<dbReference type="Pfam" id="PF00589">
    <property type="entry name" value="Phage_integrase"/>
    <property type="match status" value="1"/>
</dbReference>
<dbReference type="SUPFAM" id="SSF56349">
    <property type="entry name" value="DNA breaking-rejoining enzymes"/>
    <property type="match status" value="1"/>
</dbReference>
<dbReference type="SUPFAM" id="SSF47823">
    <property type="entry name" value="lambda integrase-like, N-terminal domain"/>
    <property type="match status" value="1"/>
</dbReference>
<dbReference type="PROSITE" id="PS51900">
    <property type="entry name" value="CB"/>
    <property type="match status" value="1"/>
</dbReference>
<dbReference type="PROSITE" id="PS51898">
    <property type="entry name" value="TYR_RECOMBINASE"/>
    <property type="match status" value="1"/>
</dbReference>
<reference key="1">
    <citation type="submission" date="2008-02" db="EMBL/GenBank/DDBJ databases">
        <title>Complete sequence of Pseudomonas putida W619.</title>
        <authorList>
            <person name="Copeland A."/>
            <person name="Lucas S."/>
            <person name="Lapidus A."/>
            <person name="Barry K."/>
            <person name="Detter J.C."/>
            <person name="Glavina del Rio T."/>
            <person name="Dalin E."/>
            <person name="Tice H."/>
            <person name="Pitluck S."/>
            <person name="Chain P."/>
            <person name="Malfatti S."/>
            <person name="Shin M."/>
            <person name="Vergez L."/>
            <person name="Schmutz J."/>
            <person name="Larimer F."/>
            <person name="Land M."/>
            <person name="Hauser L."/>
            <person name="Kyrpides N."/>
            <person name="Kim E."/>
            <person name="Taghavi S."/>
            <person name="Vangronsveld D."/>
            <person name="van der Lelie D."/>
            <person name="Richardson P."/>
        </authorList>
    </citation>
    <scope>NUCLEOTIDE SEQUENCE [LARGE SCALE GENOMIC DNA]</scope>
    <source>
        <strain>W619</strain>
    </source>
</reference>
<proteinExistence type="inferred from homology"/>
<comment type="function">
    <text evidence="1">Site-specific tyrosine recombinase, which acts by catalyzing the cutting and rejoining of the recombining DNA molecules. The XerC-XerD complex is essential to convert dimers of the bacterial chromosome into monomers to permit their segregation at cell division. It also contributes to the segregational stability of plasmids.</text>
</comment>
<comment type="subunit">
    <text evidence="1">Forms a cyclic heterotetrameric complex composed of two molecules of XerC and two molecules of XerD.</text>
</comment>
<comment type="subcellular location">
    <subcellularLocation>
        <location evidence="1">Cytoplasm</location>
    </subcellularLocation>
</comment>
<comment type="similarity">
    <text evidence="1">Belongs to the 'phage' integrase family. XerC subfamily.</text>
</comment>
<protein>
    <recommendedName>
        <fullName evidence="1">Tyrosine recombinase XerC</fullName>
    </recommendedName>
</protein>
<keyword id="KW-0131">Cell cycle</keyword>
<keyword id="KW-0132">Cell division</keyword>
<keyword id="KW-0159">Chromosome partition</keyword>
<keyword id="KW-0963">Cytoplasm</keyword>
<keyword id="KW-0229">DNA integration</keyword>
<keyword id="KW-0233">DNA recombination</keyword>
<keyword id="KW-0238">DNA-binding</keyword>
<name>XERC_PSEPW</name>
<accession>B1J1V8</accession>
<feature type="chain" id="PRO_1000187608" description="Tyrosine recombinase XerC">
    <location>
        <begin position="1"/>
        <end position="299"/>
    </location>
</feature>
<feature type="domain" description="Core-binding (CB)" evidence="3">
    <location>
        <begin position="1"/>
        <end position="85"/>
    </location>
</feature>
<feature type="domain" description="Tyr recombinase" evidence="2">
    <location>
        <begin position="106"/>
        <end position="285"/>
    </location>
</feature>
<feature type="active site" evidence="1">
    <location>
        <position position="146"/>
    </location>
</feature>
<feature type="active site" evidence="1">
    <location>
        <position position="170"/>
    </location>
</feature>
<feature type="active site" evidence="1">
    <location>
        <position position="237"/>
    </location>
</feature>
<feature type="active site" evidence="1">
    <location>
        <position position="240"/>
    </location>
</feature>
<feature type="active site" evidence="1">
    <location>
        <position position="263"/>
    </location>
</feature>
<feature type="active site" description="O-(3'-phospho-DNA)-tyrosine intermediate" evidence="1">
    <location>
        <position position="272"/>
    </location>
</feature>